<protein>
    <recommendedName>
        <fullName evidence="1">Large ribosomal subunit protein bL21</fullName>
    </recommendedName>
    <alternativeName>
        <fullName evidence="2">50S ribosomal protein L21</fullName>
    </alternativeName>
</protein>
<keyword id="KW-0687">Ribonucleoprotein</keyword>
<keyword id="KW-0689">Ribosomal protein</keyword>
<keyword id="KW-0694">RNA-binding</keyword>
<keyword id="KW-0699">rRNA-binding</keyword>
<comment type="function">
    <text evidence="1">This protein binds to 23S rRNA in the presence of protein L20.</text>
</comment>
<comment type="subunit">
    <text evidence="1">Part of the 50S ribosomal subunit. Contacts protein L20.</text>
</comment>
<comment type="similarity">
    <text evidence="1">Belongs to the bacterial ribosomal protein bL21 family.</text>
</comment>
<proteinExistence type="inferred from homology"/>
<sequence length="104" mass="11562">MYAIIKNGGKQYKVKEGEVVKLEKFDLGIGEKVEFDTVLMGQTAAGEVKIGAPTVAGAKVVGEVVEQGRHKKVKIMKFRRRKHSMKQQGHRQYFTAVKVSSISL</sequence>
<evidence type="ECO:0000255" key="1">
    <source>
        <dbReference type="HAMAP-Rule" id="MF_01363"/>
    </source>
</evidence>
<evidence type="ECO:0000305" key="2"/>
<accession>Q0BL02</accession>
<feature type="chain" id="PRO_0000270667" description="Large ribosomal subunit protein bL21">
    <location>
        <begin position="1"/>
        <end position="104"/>
    </location>
</feature>
<dbReference type="EMBL" id="CP000437">
    <property type="protein sequence ID" value="ABI83232.1"/>
    <property type="molecule type" value="Genomic_DNA"/>
</dbReference>
<dbReference type="RefSeq" id="WP_003016753.1">
    <property type="nucleotide sequence ID" value="NC_017463.1"/>
</dbReference>
<dbReference type="SMR" id="Q0BL02"/>
<dbReference type="GeneID" id="75263828"/>
<dbReference type="KEGG" id="fth:FTH_1415"/>
<dbReference type="GO" id="GO:0005737">
    <property type="term" value="C:cytoplasm"/>
    <property type="evidence" value="ECO:0007669"/>
    <property type="project" value="UniProtKB-ARBA"/>
</dbReference>
<dbReference type="GO" id="GO:1990904">
    <property type="term" value="C:ribonucleoprotein complex"/>
    <property type="evidence" value="ECO:0007669"/>
    <property type="project" value="UniProtKB-KW"/>
</dbReference>
<dbReference type="GO" id="GO:0005840">
    <property type="term" value="C:ribosome"/>
    <property type="evidence" value="ECO:0007669"/>
    <property type="project" value="UniProtKB-KW"/>
</dbReference>
<dbReference type="GO" id="GO:0019843">
    <property type="term" value="F:rRNA binding"/>
    <property type="evidence" value="ECO:0007669"/>
    <property type="project" value="UniProtKB-UniRule"/>
</dbReference>
<dbReference type="GO" id="GO:0003735">
    <property type="term" value="F:structural constituent of ribosome"/>
    <property type="evidence" value="ECO:0007669"/>
    <property type="project" value="InterPro"/>
</dbReference>
<dbReference type="GO" id="GO:0006412">
    <property type="term" value="P:translation"/>
    <property type="evidence" value="ECO:0007669"/>
    <property type="project" value="UniProtKB-UniRule"/>
</dbReference>
<dbReference type="HAMAP" id="MF_01363">
    <property type="entry name" value="Ribosomal_bL21"/>
    <property type="match status" value="1"/>
</dbReference>
<dbReference type="InterPro" id="IPR028909">
    <property type="entry name" value="bL21-like"/>
</dbReference>
<dbReference type="InterPro" id="IPR036164">
    <property type="entry name" value="bL21-like_sf"/>
</dbReference>
<dbReference type="InterPro" id="IPR001787">
    <property type="entry name" value="Ribosomal_bL21"/>
</dbReference>
<dbReference type="InterPro" id="IPR018258">
    <property type="entry name" value="Ribosomal_bL21_CS"/>
</dbReference>
<dbReference type="NCBIfam" id="TIGR00061">
    <property type="entry name" value="L21"/>
    <property type="match status" value="1"/>
</dbReference>
<dbReference type="PANTHER" id="PTHR21349">
    <property type="entry name" value="50S RIBOSOMAL PROTEIN L21"/>
    <property type="match status" value="1"/>
</dbReference>
<dbReference type="PANTHER" id="PTHR21349:SF0">
    <property type="entry name" value="LARGE RIBOSOMAL SUBUNIT PROTEIN BL21M"/>
    <property type="match status" value="1"/>
</dbReference>
<dbReference type="Pfam" id="PF00829">
    <property type="entry name" value="Ribosomal_L21p"/>
    <property type="match status" value="1"/>
</dbReference>
<dbReference type="SUPFAM" id="SSF141091">
    <property type="entry name" value="L21p-like"/>
    <property type="match status" value="1"/>
</dbReference>
<dbReference type="PROSITE" id="PS01169">
    <property type="entry name" value="RIBOSOMAL_L21"/>
    <property type="match status" value="1"/>
</dbReference>
<organism>
    <name type="scientific">Francisella tularensis subsp. holarctica (strain OSU18)</name>
    <dbReference type="NCBI Taxonomy" id="393011"/>
    <lineage>
        <taxon>Bacteria</taxon>
        <taxon>Pseudomonadati</taxon>
        <taxon>Pseudomonadota</taxon>
        <taxon>Gammaproteobacteria</taxon>
        <taxon>Thiotrichales</taxon>
        <taxon>Francisellaceae</taxon>
        <taxon>Francisella</taxon>
    </lineage>
</organism>
<gene>
    <name evidence="1" type="primary">rplU</name>
    <name type="ordered locus">FTH_1415</name>
</gene>
<name>RL21_FRATO</name>
<reference key="1">
    <citation type="journal article" date="2006" name="J. Bacteriol.">
        <title>Chromosome rearrangement and diversification of Francisella tularensis revealed by the type B (OSU18) genome sequence.</title>
        <authorList>
            <person name="Petrosino J.F."/>
            <person name="Xiang Q."/>
            <person name="Karpathy S.E."/>
            <person name="Jiang H."/>
            <person name="Yerrapragada S."/>
            <person name="Liu Y."/>
            <person name="Gioia J."/>
            <person name="Hemphill L."/>
            <person name="Gonzalez A."/>
            <person name="Raghavan T.M."/>
            <person name="Uzman A."/>
            <person name="Fox G.E."/>
            <person name="Highlander S."/>
            <person name="Reichard M."/>
            <person name="Morton R.J."/>
            <person name="Clinkenbeard K.D."/>
            <person name="Weinstock G.M."/>
        </authorList>
    </citation>
    <scope>NUCLEOTIDE SEQUENCE [LARGE SCALE GENOMIC DNA]</scope>
    <source>
        <strain>OSU18</strain>
    </source>
</reference>